<protein>
    <recommendedName>
        <fullName>Peptide chain release factor 2</fullName>
        <shortName>RF-2</shortName>
    </recommendedName>
</protein>
<reference key="1">
    <citation type="journal article" date="2004" name="Nat. Genet.">
        <title>Comparison of genome degradation in Paratyphi A and Typhi, human-restricted serovars of Salmonella enterica that cause typhoid.</title>
        <authorList>
            <person name="McClelland M."/>
            <person name="Sanderson K.E."/>
            <person name="Clifton S.W."/>
            <person name="Latreille P."/>
            <person name="Porwollik S."/>
            <person name="Sabo A."/>
            <person name="Meyer R."/>
            <person name="Bieri T."/>
            <person name="Ozersky P."/>
            <person name="McLellan M."/>
            <person name="Harkins C.R."/>
            <person name="Wang C."/>
            <person name="Nguyen C."/>
            <person name="Berghoff A."/>
            <person name="Elliott G."/>
            <person name="Kohlberg S."/>
            <person name="Strong C."/>
            <person name="Du F."/>
            <person name="Carter J."/>
            <person name="Kremizki C."/>
            <person name="Layman D."/>
            <person name="Leonard S."/>
            <person name="Sun H."/>
            <person name="Fulton L."/>
            <person name="Nash W."/>
            <person name="Miner T."/>
            <person name="Minx P."/>
            <person name="Delehaunty K."/>
            <person name="Fronick C."/>
            <person name="Magrini V."/>
            <person name="Nhan M."/>
            <person name="Warren W."/>
            <person name="Florea L."/>
            <person name="Spieth J."/>
            <person name="Wilson R.K."/>
        </authorList>
    </citation>
    <scope>NUCLEOTIDE SEQUENCE [LARGE SCALE GENOMIC DNA]</scope>
    <source>
        <strain>ATCC 9150 / SARB42</strain>
    </source>
</reference>
<keyword id="KW-0963">Cytoplasm</keyword>
<keyword id="KW-0488">Methylation</keyword>
<keyword id="KW-0648">Protein biosynthesis</keyword>
<keyword id="KW-0688">Ribosomal frameshifting</keyword>
<gene>
    <name type="primary">prfB</name>
    <name type="ordered locus">SPA2909</name>
</gene>
<comment type="function">
    <text evidence="1">Peptide chain release factor 2 directs the termination of translation in response to the peptide chain termination codons UGA and UAA.</text>
</comment>
<comment type="subcellular location">
    <subcellularLocation>
        <location evidence="1">Cytoplasm</location>
    </subcellularLocation>
</comment>
<comment type="PTM">
    <text evidence="1">Methylated by PrmC. Methylation increases the termination efficiency of RF2 (By similarity).</text>
</comment>
<comment type="miscellaneous">
    <text evidence="1">The gene for this protein contains a UGA in-frame termination codon after Leu-25; a naturally occurring frameshift enables complete translation of RF-2. This provides a mechanism for the protein to regulate its own production (By similarity).</text>
</comment>
<comment type="similarity">
    <text evidence="2">Belongs to the prokaryotic/mitochondrial release factor family.</text>
</comment>
<dbReference type="EMBL" id="CP000026">
    <property type="protein sequence ID" value="AAV78750.1"/>
    <property type="molecule type" value="Genomic_DNA"/>
</dbReference>
<dbReference type="SMR" id="Q5PJG1"/>
<dbReference type="KEGG" id="spt:SPA2909"/>
<dbReference type="HOGENOM" id="CLU_220733_1_0_6"/>
<dbReference type="Proteomes" id="UP000008185">
    <property type="component" value="Chromosome"/>
</dbReference>
<dbReference type="GO" id="GO:0005737">
    <property type="term" value="C:cytoplasm"/>
    <property type="evidence" value="ECO:0007669"/>
    <property type="project" value="UniProtKB-SubCell"/>
</dbReference>
<dbReference type="GO" id="GO:0016149">
    <property type="term" value="F:translation release factor activity, codon specific"/>
    <property type="evidence" value="ECO:0007669"/>
    <property type="project" value="UniProtKB-UniRule"/>
</dbReference>
<dbReference type="GO" id="GO:0075523">
    <property type="term" value="P:viral translational frameshifting"/>
    <property type="evidence" value="ECO:0007669"/>
    <property type="project" value="UniProtKB-KW"/>
</dbReference>
<dbReference type="FunFam" id="1.20.58.410:FF:000001">
    <property type="entry name" value="Peptide chain release factor 2"/>
    <property type="match status" value="1"/>
</dbReference>
<dbReference type="FunFam" id="3.30.160.20:FF:000010">
    <property type="entry name" value="Peptide chain release factor 2"/>
    <property type="match status" value="1"/>
</dbReference>
<dbReference type="Gene3D" id="3.30.160.20">
    <property type="match status" value="1"/>
</dbReference>
<dbReference type="Gene3D" id="3.30.70.1660">
    <property type="match status" value="1"/>
</dbReference>
<dbReference type="Gene3D" id="1.20.58.410">
    <property type="entry name" value="Release factor"/>
    <property type="match status" value="1"/>
</dbReference>
<dbReference type="HAMAP" id="MF_00094">
    <property type="entry name" value="Rel_fac_2"/>
    <property type="match status" value="1"/>
</dbReference>
<dbReference type="InterPro" id="IPR005139">
    <property type="entry name" value="PCRF"/>
</dbReference>
<dbReference type="InterPro" id="IPR000352">
    <property type="entry name" value="Pep_chain_release_fac_I"/>
</dbReference>
<dbReference type="InterPro" id="IPR045853">
    <property type="entry name" value="Pep_chain_release_fac_I_sf"/>
</dbReference>
<dbReference type="InterPro" id="IPR004374">
    <property type="entry name" value="PrfB"/>
</dbReference>
<dbReference type="NCBIfam" id="TIGR00020">
    <property type="entry name" value="prfB"/>
    <property type="match status" value="1"/>
</dbReference>
<dbReference type="PANTHER" id="PTHR43116:SF3">
    <property type="entry name" value="CLASS I PEPTIDE CHAIN RELEASE FACTOR"/>
    <property type="match status" value="1"/>
</dbReference>
<dbReference type="PANTHER" id="PTHR43116">
    <property type="entry name" value="PEPTIDE CHAIN RELEASE FACTOR 2"/>
    <property type="match status" value="1"/>
</dbReference>
<dbReference type="Pfam" id="PF03462">
    <property type="entry name" value="PCRF"/>
    <property type="match status" value="1"/>
</dbReference>
<dbReference type="Pfam" id="PF00472">
    <property type="entry name" value="RF-1"/>
    <property type="match status" value="1"/>
</dbReference>
<dbReference type="SMART" id="SM00937">
    <property type="entry name" value="PCRF"/>
    <property type="match status" value="1"/>
</dbReference>
<dbReference type="SUPFAM" id="SSF75620">
    <property type="entry name" value="Release factor"/>
    <property type="match status" value="1"/>
</dbReference>
<dbReference type="PROSITE" id="PS00745">
    <property type="entry name" value="RF_PROK_I"/>
    <property type="match status" value="1"/>
</dbReference>
<sequence length="365" mass="41149">MFEINPVNNRIQDLTERTNVLRGYLDYDAKKERLEEVNAELEQPDVWNEPERAQALGKERSSLEAIVDTLDQMTQGLDDVSGLLELAVEADDEETFNEAVAELNTLEEKLAQLEFRRMFSGEYDSADCYLDIQAGSGGTEAQDWASMLLRMYLRWAEARGFKTEVIEESEGEVAGIKSATIKISGEYAYGWLRTETGVHRLVRKSPFDSGGRRHTSFSSAFVYPEVDDDIDIDINPADLRIDVYRASGAGGQHVNRTESAVRITHIPTGIVTQCQNDRSQHKNKDQAMKQMKAKLYELEMQKKNAEKQAMEDTKSDIGWGSQIRSYVLDDSRIKDLRTGVETRNTQAVLDGSLDQFIEASLKAGL</sequence>
<name>RF2_SALPA</name>
<feature type="chain" id="PRO_0000166841" description="Peptide chain release factor 2">
    <location>
        <begin position="1"/>
        <end position="365"/>
    </location>
</feature>
<feature type="modified residue" description="N5-methylglutamine" evidence="1">
    <location>
        <position position="252"/>
    </location>
</feature>
<proteinExistence type="inferred from homology"/>
<evidence type="ECO:0000250" key="1"/>
<evidence type="ECO:0000305" key="2"/>
<organism>
    <name type="scientific">Salmonella paratyphi A (strain ATCC 9150 / SARB42)</name>
    <dbReference type="NCBI Taxonomy" id="295319"/>
    <lineage>
        <taxon>Bacteria</taxon>
        <taxon>Pseudomonadati</taxon>
        <taxon>Pseudomonadota</taxon>
        <taxon>Gammaproteobacteria</taxon>
        <taxon>Enterobacterales</taxon>
        <taxon>Enterobacteriaceae</taxon>
        <taxon>Salmonella</taxon>
    </lineage>
</organism>
<accession>Q5PJG1</accession>